<dbReference type="EMBL" id="AE014075">
    <property type="protein sequence ID" value="AAN78684.1"/>
    <property type="molecule type" value="Genomic_DNA"/>
</dbReference>
<dbReference type="RefSeq" id="WP_000845407.1">
    <property type="nucleotide sequence ID" value="NZ_CP051263.1"/>
</dbReference>
<dbReference type="SMR" id="Q8FL15"/>
<dbReference type="STRING" id="199310.c0190"/>
<dbReference type="KEGG" id="ecc:c0190"/>
<dbReference type="eggNOG" id="COG0038">
    <property type="taxonomic scope" value="Bacteria"/>
</dbReference>
<dbReference type="HOGENOM" id="CLU_015263_7_0_6"/>
<dbReference type="BioCyc" id="ECOL199310:C0190-MONOMER"/>
<dbReference type="Proteomes" id="UP000001410">
    <property type="component" value="Chromosome"/>
</dbReference>
<dbReference type="GO" id="GO:0005886">
    <property type="term" value="C:plasma membrane"/>
    <property type="evidence" value="ECO:0007669"/>
    <property type="project" value="UniProtKB-SubCell"/>
</dbReference>
<dbReference type="GO" id="GO:0015297">
    <property type="term" value="F:antiporter activity"/>
    <property type="evidence" value="ECO:0007669"/>
    <property type="project" value="UniProtKB-UniRule"/>
</dbReference>
<dbReference type="GO" id="GO:0005247">
    <property type="term" value="F:voltage-gated chloride channel activity"/>
    <property type="evidence" value="ECO:0007669"/>
    <property type="project" value="TreeGrafter"/>
</dbReference>
<dbReference type="CDD" id="cd01031">
    <property type="entry name" value="EriC"/>
    <property type="match status" value="1"/>
</dbReference>
<dbReference type="FunFam" id="1.10.3080.10:FF:000005">
    <property type="entry name" value="H(+)/Cl(-) exchange transporter ClcA"/>
    <property type="match status" value="1"/>
</dbReference>
<dbReference type="Gene3D" id="1.10.3080.10">
    <property type="entry name" value="Clc chloride channel"/>
    <property type="match status" value="1"/>
</dbReference>
<dbReference type="HAMAP" id="MF_01128">
    <property type="entry name" value="CLC_ClcA"/>
    <property type="match status" value="1"/>
</dbReference>
<dbReference type="InterPro" id="IPR023861">
    <property type="entry name" value="Cl-channel_ClcA"/>
</dbReference>
<dbReference type="InterPro" id="IPR014743">
    <property type="entry name" value="Cl-channel_core"/>
</dbReference>
<dbReference type="InterPro" id="IPR001807">
    <property type="entry name" value="ClC"/>
</dbReference>
<dbReference type="NCBIfam" id="NF003640">
    <property type="entry name" value="PRK05277.1"/>
    <property type="match status" value="1"/>
</dbReference>
<dbReference type="PANTHER" id="PTHR45711">
    <property type="entry name" value="CHLORIDE CHANNEL PROTEIN"/>
    <property type="match status" value="1"/>
</dbReference>
<dbReference type="PANTHER" id="PTHR45711:SF6">
    <property type="entry name" value="CHLORIDE CHANNEL PROTEIN"/>
    <property type="match status" value="1"/>
</dbReference>
<dbReference type="Pfam" id="PF00654">
    <property type="entry name" value="Voltage_CLC"/>
    <property type="match status" value="1"/>
</dbReference>
<dbReference type="PRINTS" id="PR00762">
    <property type="entry name" value="CLCHANNEL"/>
</dbReference>
<dbReference type="SUPFAM" id="SSF81340">
    <property type="entry name" value="Clc chloride channel"/>
    <property type="match status" value="1"/>
</dbReference>
<organism>
    <name type="scientific">Escherichia coli O6:H1 (strain CFT073 / ATCC 700928 / UPEC)</name>
    <dbReference type="NCBI Taxonomy" id="199310"/>
    <lineage>
        <taxon>Bacteria</taxon>
        <taxon>Pseudomonadati</taxon>
        <taxon>Pseudomonadota</taxon>
        <taxon>Gammaproteobacteria</taxon>
        <taxon>Enterobacterales</taxon>
        <taxon>Enterobacteriaceae</taxon>
        <taxon>Escherichia</taxon>
    </lineage>
</organism>
<accession>Q8FL15</accession>
<comment type="function">
    <text evidence="1">Proton-coupled chloride transporter. Functions as antiport system and exchanges two chloride ions for 1 proton. Probably acts as an electrical shunt for an outwardly-directed proton pump that is linked to amino acid decarboxylation, as part of the extreme acid resistance (XAR) response.</text>
</comment>
<comment type="catalytic activity">
    <reaction evidence="1">
        <text>2 chloride(in) + H(+)(out) = 2 chloride(out) + H(+)(in)</text>
        <dbReference type="Rhea" id="RHEA:29567"/>
        <dbReference type="ChEBI" id="CHEBI:15378"/>
        <dbReference type="ChEBI" id="CHEBI:17996"/>
    </reaction>
</comment>
<comment type="subunit">
    <text evidence="1">Homodimer.</text>
</comment>
<comment type="subcellular location">
    <subcellularLocation>
        <location evidence="1">Cell inner membrane</location>
        <topology evidence="1">Multi-pass membrane protein</topology>
    </subcellularLocation>
</comment>
<comment type="similarity">
    <text evidence="1">Belongs to the chloride channel (TC 2.A.49) family. ClcA subfamily.</text>
</comment>
<gene>
    <name evidence="1" type="primary">clcA</name>
    <name evidence="1" type="synonym">eriC</name>
    <name type="ordered locus">c0190</name>
</gene>
<name>CLCA_ECOL6</name>
<keyword id="KW-0050">Antiport</keyword>
<keyword id="KW-0997">Cell inner membrane</keyword>
<keyword id="KW-1003">Cell membrane</keyword>
<keyword id="KW-0868">Chloride</keyword>
<keyword id="KW-0406">Ion transport</keyword>
<keyword id="KW-0472">Membrane</keyword>
<keyword id="KW-1185">Reference proteome</keyword>
<keyword id="KW-0812">Transmembrane</keyword>
<keyword id="KW-1133">Transmembrane helix</keyword>
<keyword id="KW-0813">Transport</keyword>
<feature type="chain" id="PRO_0000094474" description="H(+)/Cl(-) exchange transporter ClcA">
    <location>
        <begin position="1"/>
        <end position="473"/>
    </location>
</feature>
<feature type="topological domain" description="Cytoplasmic" evidence="1">
    <location>
        <begin position="1"/>
        <end position="32"/>
    </location>
</feature>
<feature type="transmembrane region" description="Helical" evidence="1">
    <location>
        <begin position="33"/>
        <end position="69"/>
    </location>
</feature>
<feature type="topological domain" description="Periplasmic" evidence="1">
    <location>
        <begin position="70"/>
        <end position="76"/>
    </location>
</feature>
<feature type="transmembrane region" description="Helical" evidence="1">
    <location>
        <begin position="77"/>
        <end position="100"/>
    </location>
</feature>
<feature type="intramembrane region" description="Helical" evidence="1">
    <location>
        <begin position="109"/>
        <end position="116"/>
    </location>
</feature>
<feature type="topological domain" description="Cytoplasmic" evidence="1">
    <location>
        <begin position="117"/>
        <end position="123"/>
    </location>
</feature>
<feature type="transmembrane region" description="Helical" evidence="1">
    <location>
        <begin position="124"/>
        <end position="141"/>
    </location>
</feature>
<feature type="transmembrane region" description="Helical" evidence="1">
    <location>
        <begin position="148"/>
        <end position="166"/>
    </location>
</feature>
<feature type="topological domain" description="Cytoplasmic" evidence="1">
    <location>
        <begin position="167"/>
        <end position="176"/>
    </location>
</feature>
<feature type="intramembrane region" description="Helical" evidence="1">
    <location>
        <begin position="177"/>
        <end position="189"/>
    </location>
</feature>
<feature type="intramembrane region" description="Helical" evidence="1">
    <location>
        <begin position="193"/>
        <end position="201"/>
    </location>
</feature>
<feature type="topological domain" description="Cytoplasmic" evidence="1">
    <location>
        <begin position="202"/>
        <end position="214"/>
    </location>
</feature>
<feature type="transmembrane region" description="Helical" evidence="1">
    <location>
        <begin position="215"/>
        <end position="232"/>
    </location>
</feature>
<feature type="topological domain" description="Periplasmic" evidence="1">
    <location>
        <begin position="233"/>
        <end position="252"/>
    </location>
</feature>
<feature type="transmembrane region" description="Helical" evidence="1">
    <location>
        <begin position="253"/>
        <end position="281"/>
    </location>
</feature>
<feature type="topological domain" description="Cytoplasmic" evidence="1">
    <location>
        <begin position="282"/>
        <end position="287"/>
    </location>
</feature>
<feature type="transmembrane region" description="Helical" evidence="1">
    <location>
        <begin position="288"/>
        <end position="309"/>
    </location>
</feature>
<feature type="topological domain" description="Periplasmic" evidence="1">
    <location>
        <begin position="310"/>
        <end position="329"/>
    </location>
</feature>
<feature type="transmembrane region" description="Helical" evidence="1">
    <location>
        <begin position="330"/>
        <end position="349"/>
    </location>
</feature>
<feature type="transmembrane region" description="Helical" evidence="1">
    <location>
        <begin position="355"/>
        <end position="376"/>
    </location>
</feature>
<feature type="topological domain" description="Periplasmic" evidence="1">
    <location>
        <begin position="377"/>
        <end position="386"/>
    </location>
</feature>
<feature type="intramembrane region" description="Helical" evidence="1">
    <location>
        <begin position="387"/>
        <end position="401"/>
    </location>
</feature>
<feature type="intramembrane region" description="Note=Loop between two helices" evidence="1">
    <location>
        <begin position="402"/>
        <end position="404"/>
    </location>
</feature>
<feature type="intramembrane region" description="Helical" evidence="1">
    <location>
        <begin position="405"/>
        <end position="416"/>
    </location>
</feature>
<feature type="intramembrane region" description="Note=Loop between two helices" evidence="1">
    <location>
        <begin position="417"/>
        <end position="421"/>
    </location>
</feature>
<feature type="transmembrane region" description="Helical" evidence="1">
    <location>
        <begin position="422"/>
        <end position="438"/>
    </location>
</feature>
<feature type="topological domain" description="Cytoplasmic" evidence="1">
    <location>
        <begin position="439"/>
        <end position="473"/>
    </location>
</feature>
<feature type="short sequence motif" description="Selectivity filter part_1" evidence="1">
    <location>
        <begin position="106"/>
        <end position="110"/>
    </location>
</feature>
<feature type="short sequence motif" description="Selectivity filter part_2" evidence="1">
    <location>
        <begin position="146"/>
        <end position="150"/>
    </location>
</feature>
<feature type="short sequence motif" description="Selectivity filter part_3" evidence="1">
    <location>
        <begin position="355"/>
        <end position="359"/>
    </location>
</feature>
<feature type="binding site" evidence="1">
    <location>
        <position position="107"/>
    </location>
    <ligand>
        <name>chloride</name>
        <dbReference type="ChEBI" id="CHEBI:17996"/>
    </ligand>
</feature>
<feature type="binding site" evidence="1">
    <location>
        <position position="356"/>
    </location>
    <ligand>
        <name>chloride</name>
        <dbReference type="ChEBI" id="CHEBI:17996"/>
    </ligand>
</feature>
<feature type="binding site" evidence="1">
    <location>
        <position position="357"/>
    </location>
    <ligand>
        <name>chloride</name>
        <dbReference type="ChEBI" id="CHEBI:17996"/>
    </ligand>
</feature>
<feature type="binding site" evidence="1">
    <location>
        <position position="445"/>
    </location>
    <ligand>
        <name>chloride</name>
        <dbReference type="ChEBI" id="CHEBI:17996"/>
    </ligand>
</feature>
<feature type="site" description="Mediates proton transfer from the outer aqueous phase to the interior of the protein; involved in linking H(+) and Cl(-) transport" evidence="1">
    <location>
        <position position="148"/>
    </location>
</feature>
<feature type="site" description="Mediates proton transfer from the protein to the inner aqueous phase" evidence="1">
    <location>
        <position position="203"/>
    </location>
</feature>
<reference key="1">
    <citation type="journal article" date="2002" name="Proc. Natl. Acad. Sci. U.S.A.">
        <title>Extensive mosaic structure revealed by the complete genome sequence of uropathogenic Escherichia coli.</title>
        <authorList>
            <person name="Welch R.A."/>
            <person name="Burland V."/>
            <person name="Plunkett G. III"/>
            <person name="Redford P."/>
            <person name="Roesch P."/>
            <person name="Rasko D."/>
            <person name="Buckles E.L."/>
            <person name="Liou S.-R."/>
            <person name="Boutin A."/>
            <person name="Hackett J."/>
            <person name="Stroud D."/>
            <person name="Mayhew G.F."/>
            <person name="Rose D.J."/>
            <person name="Zhou S."/>
            <person name="Schwartz D.C."/>
            <person name="Perna N.T."/>
            <person name="Mobley H.L.T."/>
            <person name="Donnenberg M.S."/>
            <person name="Blattner F.R."/>
        </authorList>
    </citation>
    <scope>NUCLEOTIDE SEQUENCE [LARGE SCALE GENOMIC DNA]</scope>
    <source>
        <strain>CFT073 / ATCC 700928 / UPEC</strain>
    </source>
</reference>
<evidence type="ECO:0000255" key="1">
    <source>
        <dbReference type="HAMAP-Rule" id="MF_01128"/>
    </source>
</evidence>
<protein>
    <recommendedName>
        <fullName evidence="1">H(+)/Cl(-) exchange transporter ClcA</fullName>
    </recommendedName>
</protein>
<sequence length="473" mass="50404">MKTDTPSLETPQAARLRRRQLIRQLLERDKTPLAILFMAAVVGTLVGLAAVAFDKGVAWLQNQRMGALVHTADNYPLLLTVAFLCSAVLAMFGYFLVRKYAPEAGGSGIPEIEGALEDQRPVRWWRVLPVKFFGGLGTLGGGMVLGREGPTVQIGGNIGRMVLDVFRLKGDEARHTLLATGAAAGLAAAFNAPLAGILFIIEEMRPQFRYTLISIKAVFIGVIMSTIMYRIFNHEVALIDVGKLSDAPLNTLWLYLILGIIFGIFGPIFNKWVLGMQDLLHRVHGGNITKWVLMGGAIGGLCGLLGFVAPATSGGGFNLIPIATAGNFSMGMLVFIFVARVITTLLCFSSGAPGGIFAPMLALGTVLGTAFGMVAVELFPQYHLEAGTFAIAGMGALLAASIRAPLTGIILVLEMTDNYQLILPMIITGLGATLLAQFTGGKPLYSAILARTLAKQEAEQLARSKAASARENT</sequence>
<proteinExistence type="inferred from homology"/>